<evidence type="ECO:0000255" key="1">
    <source>
        <dbReference type="PROSITE-ProRule" id="PRU01151"/>
    </source>
</evidence>
<evidence type="ECO:0000305" key="2"/>
<comment type="function">
    <text>This protein is a Fe-Mo-cofactor biosynthetic component.</text>
</comment>
<comment type="catalytic activity">
    <reaction>
        <text>acetyl-CoA + 2-oxoglutarate + H2O = (2R)-homocitrate + CoA + H(+)</text>
        <dbReference type="Rhea" id="RHEA:12929"/>
        <dbReference type="ChEBI" id="CHEBI:15377"/>
        <dbReference type="ChEBI" id="CHEBI:15378"/>
        <dbReference type="ChEBI" id="CHEBI:16810"/>
        <dbReference type="ChEBI" id="CHEBI:57287"/>
        <dbReference type="ChEBI" id="CHEBI:57288"/>
        <dbReference type="ChEBI" id="CHEBI:58884"/>
        <dbReference type="EC" id="2.3.3.14"/>
    </reaction>
</comment>
<comment type="similarity">
    <text evidence="2">Belongs to the alpha-IPM synthase/homocitrate synthase family.</text>
</comment>
<reference key="1">
    <citation type="journal article" date="1998" name="FEMS Microbiol. Lett.">
        <title>Sequencing and complementation analysis of the nifUSV genes from Azospirillum brasilense.</title>
        <authorList>
            <person name="Frazzon J.S."/>
            <person name="Schrank I.S."/>
        </authorList>
    </citation>
    <scope>NUCLEOTIDE SEQUENCE [GENOMIC DNA]</scope>
    <source>
        <strain>ATCC 29145 / DSM 1690 / IMET 11303 / Sp7</strain>
    </source>
</reference>
<gene>
    <name type="primary">nifV</name>
</gene>
<protein>
    <recommendedName>
        <fullName>Homocitrate synthase</fullName>
        <ecNumber>2.3.3.14</ecNumber>
    </recommendedName>
</protein>
<keyword id="KW-0535">Nitrogen fixation</keyword>
<keyword id="KW-0808">Transferase</keyword>
<organism>
    <name type="scientific">Azospirillum brasilense</name>
    <dbReference type="NCBI Taxonomy" id="192"/>
    <lineage>
        <taxon>Bacteria</taxon>
        <taxon>Pseudomonadati</taxon>
        <taxon>Pseudomonadota</taxon>
        <taxon>Alphaproteobacteria</taxon>
        <taxon>Rhodospirillales</taxon>
        <taxon>Azospirillaceae</taxon>
        <taxon>Azospirillum</taxon>
    </lineage>
</organism>
<feature type="chain" id="PRO_0000140458" description="Homocitrate synthase">
    <location>
        <begin position="1"/>
        <end position="376"/>
    </location>
</feature>
<feature type="domain" description="Pyruvate carboxyltransferase" evidence="1">
    <location>
        <begin position="5"/>
        <end position="252"/>
    </location>
</feature>
<sequence>MAGSTIINDTHARDGEQTAGVAFTLDEKIAIAQALDEAGVAELEIGIPAMGREERERIRAVASLGLKARLMVWCRMHDTDLKARSTAVAPSLSVPVSDIHITKKLNGSRAWALREIERKVKTARDHGLEVSLGGEDSSRADMDFLIAAATVAQRPRFRFADTLGVLDPFQHARLHLTAAATDPEIGYHAHTPRLANATAWVTLAAVLGGATHVNTTVNGLGERAGNAPLEEVVVSLKVLYGQDCGVDTRALGAISDLVERASNRPVAVNKSIVRDAVFTHEAGIHVDGLLTDRAPTRISTPPRWGASTASCWASIPARGGEDGLRQLGIACDDATAQACCRGSGRATRAKPPDGGGAARPFHDDACWQAFPAAGGV</sequence>
<proteinExistence type="inferred from homology"/>
<accession>P70728</accession>
<name>NIFV_AZOBR</name>
<dbReference type="EC" id="2.3.3.14"/>
<dbReference type="EMBL" id="U26427">
    <property type="protein sequence ID" value="AAC46178.1"/>
    <property type="molecule type" value="Genomic_DNA"/>
</dbReference>
<dbReference type="SMR" id="P70728"/>
<dbReference type="GO" id="GO:0004410">
    <property type="term" value="F:homocitrate synthase activity"/>
    <property type="evidence" value="ECO:0007669"/>
    <property type="project" value="UniProtKB-EC"/>
</dbReference>
<dbReference type="GO" id="GO:0009399">
    <property type="term" value="P:nitrogen fixation"/>
    <property type="evidence" value="ECO:0007669"/>
    <property type="project" value="UniProtKB-KW"/>
</dbReference>
<dbReference type="Gene3D" id="3.20.20.70">
    <property type="entry name" value="Aldolase class I"/>
    <property type="match status" value="1"/>
</dbReference>
<dbReference type="InterPro" id="IPR013785">
    <property type="entry name" value="Aldolase_TIM"/>
</dbReference>
<dbReference type="InterPro" id="IPR000891">
    <property type="entry name" value="PYR_CT"/>
</dbReference>
<dbReference type="PANTHER" id="PTHR42880">
    <property type="entry name" value="HOMOCITRATE SYNTHASE"/>
    <property type="match status" value="1"/>
</dbReference>
<dbReference type="PANTHER" id="PTHR42880:SF1">
    <property type="entry name" value="ISOPROPYLMALATE_HOMOCITRATE_CITRAMALATE SYNTHASE FAMILY PROTEIN"/>
    <property type="match status" value="1"/>
</dbReference>
<dbReference type="Pfam" id="PF00682">
    <property type="entry name" value="HMGL-like"/>
    <property type="match status" value="1"/>
</dbReference>
<dbReference type="SUPFAM" id="SSF51569">
    <property type="entry name" value="Aldolase"/>
    <property type="match status" value="1"/>
</dbReference>
<dbReference type="PROSITE" id="PS50991">
    <property type="entry name" value="PYR_CT"/>
    <property type="match status" value="1"/>
</dbReference>